<sequence length="51" mass="5984">MSWLNFLKYIAKYGKKAVSAAWKYKGKVLEWLNVGPTLEWVWQKLKKIAGL</sequence>
<comment type="function">
    <text>Antibacterial peptide active against a broad range of lactic acid bacteria, L.monocytogenes and many epidemiologically unrelated strains of S.aureus involved in bovine mastitis.</text>
</comment>
<comment type="subcellular location">
    <subcellularLocation>
        <location>Secreted</location>
    </subcellularLocation>
</comment>
<comment type="mass spectrometry" mass="6012.5" error="0.5" method="MALDI" evidence="1"/>
<feature type="chain" id="PRO_0000356957" description="Bacteriocin aureocin A53">
    <location>
        <begin position="1"/>
        <end position="51"/>
    </location>
</feature>
<feature type="modified residue" description="N-formylmethionine" evidence="1">
    <location>
        <position position="1"/>
    </location>
</feature>
<feature type="helix" evidence="3">
    <location>
        <begin position="3"/>
        <end position="10"/>
    </location>
</feature>
<feature type="helix" evidence="3">
    <location>
        <begin position="11"/>
        <end position="13"/>
    </location>
</feature>
<feature type="helix" evidence="3">
    <location>
        <begin position="15"/>
        <end position="23"/>
    </location>
</feature>
<feature type="helix" evidence="3">
    <location>
        <begin position="25"/>
        <end position="34"/>
    </location>
</feature>
<feature type="strand" evidence="2">
    <location>
        <begin position="35"/>
        <end position="37"/>
    </location>
</feature>
<feature type="helix" evidence="3">
    <location>
        <begin position="38"/>
        <end position="48"/>
    </location>
</feature>
<name>AUREO_STAAU</name>
<dbReference type="EMBL" id="AF447813">
    <property type="protein sequence ID" value="AAN71834.1"/>
    <property type="molecule type" value="Genomic_DNA"/>
</dbReference>
<dbReference type="RefSeq" id="WP_032072954.1">
    <property type="nucleotide sequence ID" value="NC_025194.1"/>
</dbReference>
<dbReference type="RefSeq" id="YP_009072012.1">
    <property type="nucleotide sequence ID" value="NC_025194.1"/>
</dbReference>
<dbReference type="PDB" id="2N8O">
    <property type="method" value="NMR"/>
    <property type="chains" value="A=1-51"/>
</dbReference>
<dbReference type="PDB" id="8AVR">
    <property type="method" value="X-ray"/>
    <property type="resolution" value="1.13 A"/>
    <property type="chains" value="A/C=1-51"/>
</dbReference>
<dbReference type="PDB" id="8AVS">
    <property type="method" value="X-ray"/>
    <property type="resolution" value="1.21 A"/>
    <property type="chains" value="A/B=1-51"/>
</dbReference>
<dbReference type="PDB" id="8AVT">
    <property type="method" value="X-ray"/>
    <property type="resolution" value="1.20 A"/>
    <property type="chains" value="A/B=1-51"/>
</dbReference>
<dbReference type="PDB" id="8AVU">
    <property type="method" value="X-ray"/>
    <property type="resolution" value="0.89 A"/>
    <property type="chains" value="A=1-51"/>
</dbReference>
<dbReference type="PDBsum" id="2N8O"/>
<dbReference type="PDBsum" id="8AVR"/>
<dbReference type="PDBsum" id="8AVS"/>
<dbReference type="PDBsum" id="8AVT"/>
<dbReference type="PDBsum" id="8AVU"/>
<dbReference type="BMRB" id="Q8GPI4"/>
<dbReference type="SMR" id="Q8GPI4"/>
<dbReference type="EvolutionaryTrace" id="Q8GPI4"/>
<dbReference type="GO" id="GO:0005576">
    <property type="term" value="C:extracellular region"/>
    <property type="evidence" value="ECO:0007669"/>
    <property type="project" value="UniProtKB-SubCell"/>
</dbReference>
<dbReference type="GO" id="GO:0042742">
    <property type="term" value="P:defense response to bacterium"/>
    <property type="evidence" value="ECO:0007669"/>
    <property type="project" value="UniProtKB-KW"/>
</dbReference>
<dbReference type="GO" id="GO:0031640">
    <property type="term" value="P:killing of cells of another organism"/>
    <property type="evidence" value="ECO:0007669"/>
    <property type="project" value="UniProtKB-KW"/>
</dbReference>
<dbReference type="InterPro" id="IPR020968">
    <property type="entry name" value="Bacteriocin_II_aureocin-like"/>
</dbReference>
<dbReference type="NCBIfam" id="NF033881">
    <property type="entry name" value="aureocin_A53"/>
    <property type="match status" value="1"/>
</dbReference>
<dbReference type="Pfam" id="PF11758">
    <property type="entry name" value="Bacteriocin_IIi"/>
    <property type="match status" value="1"/>
</dbReference>
<geneLocation type="plasmid">
    <name>pRJ9</name>
</geneLocation>
<reference key="1">
    <citation type="journal article" date="2002" name="J. Mol. Biol.">
        <title>Biochemical characterisation and genetic analysis of aureocin A53, a new, atypical bacteriocin from Staphylococcus aureus.</title>
        <authorList>
            <person name="Netz D.J."/>
            <person name="Pohl R."/>
            <person name="Beck-Sickinger A.G."/>
            <person name="Selmer T."/>
            <person name="Pierik A.J."/>
            <person name="De Freire Bastos M.C."/>
            <person name="Sahl H.-G."/>
        </authorList>
    </citation>
    <scope>NUCLEOTIDE SEQUENCE [GENOMIC DNA]</scope>
    <scope>PROTEIN SEQUENCE OF 1-12; 17-23; 28-44 AND 48-51</scope>
    <scope>FORMYLATION AT MET-1</scope>
    <scope>MASS SPECTROMETRY</scope>
    <source>
        <strain>A53</strain>
    </source>
</reference>
<accession>Q8GPI4</accession>
<keyword id="KW-0002">3D-structure</keyword>
<keyword id="KW-0044">Antibiotic</keyword>
<keyword id="KW-0929">Antimicrobial</keyword>
<keyword id="KW-0078">Bacteriocin</keyword>
<keyword id="KW-0903">Direct protein sequencing</keyword>
<keyword id="KW-0291">Formylation</keyword>
<keyword id="KW-0614">Plasmid</keyword>
<keyword id="KW-0964">Secreted</keyword>
<gene>
    <name type="primary">aucA</name>
</gene>
<organism>
    <name type="scientific">Staphylococcus aureus</name>
    <dbReference type="NCBI Taxonomy" id="1280"/>
    <lineage>
        <taxon>Bacteria</taxon>
        <taxon>Bacillati</taxon>
        <taxon>Bacillota</taxon>
        <taxon>Bacilli</taxon>
        <taxon>Bacillales</taxon>
        <taxon>Staphylococcaceae</taxon>
        <taxon>Staphylococcus</taxon>
    </lineage>
</organism>
<proteinExistence type="evidence at protein level"/>
<evidence type="ECO:0000269" key="1">
    <source>
    </source>
</evidence>
<evidence type="ECO:0007829" key="2">
    <source>
        <dbReference type="PDB" id="2N8O"/>
    </source>
</evidence>
<evidence type="ECO:0007829" key="3">
    <source>
        <dbReference type="PDB" id="8AVU"/>
    </source>
</evidence>
<protein>
    <recommendedName>
        <fullName>Bacteriocin aureocin A53</fullName>
    </recommendedName>
</protein>